<proteinExistence type="inferred from homology"/>
<evidence type="ECO:0000255" key="1">
    <source>
        <dbReference type="HAMAP-Rule" id="MF_00366"/>
    </source>
</evidence>
<feature type="chain" id="PRO_1000005935" description="DNA-directed RNA polymerase subunit omega">
    <location>
        <begin position="1"/>
        <end position="88"/>
    </location>
</feature>
<comment type="function">
    <text evidence="1">Promotes RNA polymerase assembly. Latches the N- and C-terminal regions of the beta' subunit thereby facilitating its interaction with the beta and alpha subunits.</text>
</comment>
<comment type="catalytic activity">
    <reaction evidence="1">
        <text>RNA(n) + a ribonucleoside 5'-triphosphate = RNA(n+1) + diphosphate</text>
        <dbReference type="Rhea" id="RHEA:21248"/>
        <dbReference type="Rhea" id="RHEA-COMP:14527"/>
        <dbReference type="Rhea" id="RHEA-COMP:17342"/>
        <dbReference type="ChEBI" id="CHEBI:33019"/>
        <dbReference type="ChEBI" id="CHEBI:61557"/>
        <dbReference type="ChEBI" id="CHEBI:140395"/>
        <dbReference type="EC" id="2.7.7.6"/>
    </reaction>
</comment>
<comment type="subunit">
    <text evidence="1">The RNAP catalytic core consists of 2 alpha, 1 beta, 1 beta' and 1 omega subunit. When a sigma factor is associated with the core the holoenzyme is formed, which can initiate transcription.</text>
</comment>
<comment type="similarity">
    <text evidence="1">Belongs to the RNA polymerase subunit omega family.</text>
</comment>
<gene>
    <name evidence="1" type="primary">rpoZ</name>
    <name type="ordered locus">CGSHiGG_02455</name>
</gene>
<protein>
    <recommendedName>
        <fullName evidence="1">DNA-directed RNA polymerase subunit omega</fullName>
        <shortName evidence="1">RNAP omega subunit</shortName>
        <ecNumber evidence="1">2.7.7.6</ecNumber>
    </recommendedName>
    <alternativeName>
        <fullName evidence="1">RNA polymerase omega subunit</fullName>
    </alternativeName>
    <alternativeName>
        <fullName evidence="1">Transcriptase subunit omega</fullName>
    </alternativeName>
</protein>
<dbReference type="EC" id="2.7.7.6" evidence="1"/>
<dbReference type="EMBL" id="CP000672">
    <property type="protein sequence ID" value="ABQ99528.1"/>
    <property type="molecule type" value="Genomic_DNA"/>
</dbReference>
<dbReference type="SMR" id="A5UFH3"/>
<dbReference type="KEGG" id="hiq:CGSHiGG_02455"/>
<dbReference type="HOGENOM" id="CLU_125406_5_3_6"/>
<dbReference type="Proteomes" id="UP000001990">
    <property type="component" value="Chromosome"/>
</dbReference>
<dbReference type="GO" id="GO:0000428">
    <property type="term" value="C:DNA-directed RNA polymerase complex"/>
    <property type="evidence" value="ECO:0007669"/>
    <property type="project" value="UniProtKB-KW"/>
</dbReference>
<dbReference type="GO" id="GO:0003677">
    <property type="term" value="F:DNA binding"/>
    <property type="evidence" value="ECO:0007669"/>
    <property type="project" value="UniProtKB-UniRule"/>
</dbReference>
<dbReference type="GO" id="GO:0003899">
    <property type="term" value="F:DNA-directed RNA polymerase activity"/>
    <property type="evidence" value="ECO:0007669"/>
    <property type="project" value="UniProtKB-UniRule"/>
</dbReference>
<dbReference type="GO" id="GO:0006351">
    <property type="term" value="P:DNA-templated transcription"/>
    <property type="evidence" value="ECO:0007669"/>
    <property type="project" value="UniProtKB-UniRule"/>
</dbReference>
<dbReference type="Gene3D" id="3.90.940.10">
    <property type="match status" value="1"/>
</dbReference>
<dbReference type="HAMAP" id="MF_00366">
    <property type="entry name" value="RNApol_bact_RpoZ"/>
    <property type="match status" value="1"/>
</dbReference>
<dbReference type="InterPro" id="IPR003716">
    <property type="entry name" value="DNA-dir_RNA_pol_omega"/>
</dbReference>
<dbReference type="InterPro" id="IPR006110">
    <property type="entry name" value="Pol_omega/Rpo6/RPB6"/>
</dbReference>
<dbReference type="InterPro" id="IPR036161">
    <property type="entry name" value="RPB6/omega-like_sf"/>
</dbReference>
<dbReference type="NCBIfam" id="TIGR00690">
    <property type="entry name" value="rpoZ"/>
    <property type="match status" value="1"/>
</dbReference>
<dbReference type="PANTHER" id="PTHR34476">
    <property type="entry name" value="DNA-DIRECTED RNA POLYMERASE SUBUNIT OMEGA"/>
    <property type="match status" value="1"/>
</dbReference>
<dbReference type="PANTHER" id="PTHR34476:SF1">
    <property type="entry name" value="DNA-DIRECTED RNA POLYMERASE SUBUNIT OMEGA"/>
    <property type="match status" value="1"/>
</dbReference>
<dbReference type="Pfam" id="PF01192">
    <property type="entry name" value="RNA_pol_Rpb6"/>
    <property type="match status" value="1"/>
</dbReference>
<dbReference type="SMART" id="SM01409">
    <property type="entry name" value="RNA_pol_Rpb6"/>
    <property type="match status" value="1"/>
</dbReference>
<dbReference type="SUPFAM" id="SSF63562">
    <property type="entry name" value="RPB6/omega subunit-like"/>
    <property type="match status" value="1"/>
</dbReference>
<keyword id="KW-0240">DNA-directed RNA polymerase</keyword>
<keyword id="KW-0548">Nucleotidyltransferase</keyword>
<keyword id="KW-0804">Transcription</keyword>
<keyword id="KW-0808">Transferase</keyword>
<organism>
    <name type="scientific">Haemophilus influenzae (strain PittGG)</name>
    <dbReference type="NCBI Taxonomy" id="374931"/>
    <lineage>
        <taxon>Bacteria</taxon>
        <taxon>Pseudomonadati</taxon>
        <taxon>Pseudomonadota</taxon>
        <taxon>Gammaproteobacteria</taxon>
        <taxon>Pasteurellales</taxon>
        <taxon>Pasteurellaceae</taxon>
        <taxon>Haemophilus</taxon>
    </lineage>
</organism>
<sequence length="88" mass="9888">MARVTVQDAVEKIGNRFDLILTAARRARQLQLNQSVPLVPEDNDKPTVIALREIEKGLINQDIMDAQEFQKMAKVQETEEAAVALITE</sequence>
<name>RPOZ_HAEIG</name>
<accession>A5UFH3</accession>
<reference key="1">
    <citation type="journal article" date="2007" name="Genome Biol.">
        <title>Characterization and modeling of the Haemophilus influenzae core and supragenomes based on the complete genomic sequences of Rd and 12 clinical nontypeable strains.</title>
        <authorList>
            <person name="Hogg J.S."/>
            <person name="Hu F.Z."/>
            <person name="Janto B."/>
            <person name="Boissy R."/>
            <person name="Hayes J."/>
            <person name="Keefe R."/>
            <person name="Post J.C."/>
            <person name="Ehrlich G.D."/>
        </authorList>
    </citation>
    <scope>NUCLEOTIDE SEQUENCE [LARGE SCALE GENOMIC DNA]</scope>
    <source>
        <strain>PittGG</strain>
    </source>
</reference>